<comment type="function">
    <text evidence="1">Plays a role in the inhibition of host innate immunity by inducing the degradation of key host factors required to activate interferon production such as IRF3, IRF5 or IRF7. Associates with components of cullin RING ligases (CRLs) including CUL1 or CUL3, which are essential multisubunit ubiquitination complexes, to modulate their activities.</text>
</comment>
<comment type="subunit">
    <text evidence="1">Interacts (via C-terminus) with host IRF3; this interaction leads to IRF3 degradation. Interacts with host IRF7; this interaction leads to IRF7 degradation. Interacts with host CUL1 and CUL3.</text>
</comment>
<comment type="subcellular location">
    <subcellularLocation>
        <location evidence="1">Host cytoplasm</location>
        <location evidence="1">Host cytoskeleton</location>
    </subcellularLocation>
</comment>
<comment type="domain">
    <text evidence="1">The integrity of the zinc-binding domain in NSP1 is important for degradation of host IRF3.</text>
</comment>
<comment type="domain">
    <text evidence="1">The pLxIS motif targets host IRF3 for degradation; however phosphorylation of NSP1 pLxIS motif is not required for its activity.</text>
</comment>
<comment type="similarity">
    <text evidence="1">Belongs to the rotavirus NSP1 family.</text>
</comment>
<organismHost>
    <name type="scientific">Macaca mulatta</name>
    <name type="common">Rhesus macaque</name>
    <dbReference type="NCBI Taxonomy" id="9544"/>
</organismHost>
<proteinExistence type="inferred from homology"/>
<organism>
    <name type="scientific">Rotavirus A (strain RVA/SA11-Patton/G3P[X])</name>
    <name type="common">RV-A</name>
    <name type="synonym">Simian Agent 11 (strain Patton)</name>
    <dbReference type="NCBI Taxonomy" id="36434"/>
    <lineage>
        <taxon>Viruses</taxon>
        <taxon>Riboviria</taxon>
        <taxon>Orthornavirae</taxon>
        <taxon>Duplornaviricota</taxon>
        <taxon>Resentoviricetes</taxon>
        <taxon>Reovirales</taxon>
        <taxon>Sedoreoviridae</taxon>
        <taxon>Rotavirus</taxon>
        <taxon>Rotavirus A</taxon>
    </lineage>
</organism>
<reference key="1">
    <citation type="journal article" date="1993" name="Virology">
        <title>Comparative analysis of the rotavirus NS53 gene: conservation of basic and cysteine-rich regions in the protein and possible stem-loop structures in the RNA.</title>
        <authorList>
            <person name="Hua J.J."/>
            <person name="Mansell E.E."/>
            <person name="Patton J.T."/>
        </authorList>
    </citation>
    <scope>NUCLEOTIDE SEQUENCE [GENOMIC RNA]</scope>
</reference>
<feature type="chain" id="PRO_0000149559" description="Non-structural protein 1">
    <location>
        <begin position="1"/>
        <end position="495"/>
    </location>
</feature>
<feature type="region of interest" description="RNA-binding" evidence="1">
    <location>
        <begin position="1"/>
        <end position="81"/>
    </location>
</feature>
<feature type="region of interest" description="Zinc-binding domain" evidence="1">
    <location>
        <begin position="42"/>
        <end position="79"/>
    </location>
</feature>
<feature type="region of interest" description="Important for cytoskeleton localization" evidence="1">
    <location>
        <begin position="82"/>
        <end position="177"/>
    </location>
</feature>
<feature type="region of interest" description="Interaction with host IRF3" evidence="1">
    <location>
        <begin position="320"/>
        <end position="495"/>
    </location>
</feature>
<feature type="short sequence motif" description="pLxIS motif" evidence="1">
    <location>
        <begin position="485"/>
        <end position="488"/>
    </location>
</feature>
<sequence length="495" mass="58514">MATFKDACFHYRRLTALNRRLCNIGANSIWMPVPDAKIKGWCLECCQIADLTHCYGCSLPHVCKWCVQNRRCFLDNEPHLLKLQQLKHPITKDKLQCIIDLYNIIFPINDKVIRKFERMIKQRECRNQYKIEWYNHKLLPITLNAAAFKFDENNLYYVFGLYEKSVSDIYAPYRIVNFINEFDKLLLDHINFTRMSNLPIELRAITQEYFQLSRLPSSKLKQIYFSDFTKETVIFNTYTKTPGRSIYRNVTEFNWRDELELYTDLKNDKNKLIAAMMTSKYTRFYAHDNNFGRLKMTIFELGHHCQPNYVASNHPGNASDIQYCKWCNIKYFLSKIDWRIRDMYNLLMEFIKDCYKSNVNVGHCSSVENIYPLIKRLIWSLFTNHMDQTIEEVFNHMSPVSVEGTNVIMLILGLNISLYNEIKRTLNVDSIPMVLNLNEFSSIVKSISSKWYNVDELDKLPMSIKSTEELIEMKNSGTLTEEFELLISNSEDDNE</sequence>
<dbReference type="EMBL" id="L18944">
    <property type="protein sequence ID" value="AAA47302.1"/>
    <property type="molecule type" value="Genomic_RNA"/>
</dbReference>
<dbReference type="GO" id="GO:0030430">
    <property type="term" value="C:host cell cytoplasm"/>
    <property type="evidence" value="ECO:0007669"/>
    <property type="project" value="UniProtKB-UniRule"/>
</dbReference>
<dbReference type="GO" id="GO:0044163">
    <property type="term" value="C:host cytoskeleton"/>
    <property type="evidence" value="ECO:0007669"/>
    <property type="project" value="UniProtKB-SubCell"/>
</dbReference>
<dbReference type="GO" id="GO:0046872">
    <property type="term" value="F:metal ion binding"/>
    <property type="evidence" value="ECO:0007669"/>
    <property type="project" value="UniProtKB-UniRule"/>
</dbReference>
<dbReference type="GO" id="GO:0003723">
    <property type="term" value="F:RNA binding"/>
    <property type="evidence" value="ECO:0007669"/>
    <property type="project" value="UniProtKB-UniRule"/>
</dbReference>
<dbReference type="GO" id="GO:0039548">
    <property type="term" value="P:symbiont-mediated suppression of host cytoplasmic pattern recognition receptor signaling pathway via inhibition of IRF3 activity"/>
    <property type="evidence" value="ECO:0007669"/>
    <property type="project" value="UniProtKB-UniRule"/>
</dbReference>
<dbReference type="GO" id="GO:0039557">
    <property type="term" value="P:symbiont-mediated suppression of host cytoplasmic pattern recognition receptor signaling pathway via inhibition of IRF7 activity"/>
    <property type="evidence" value="ECO:0007669"/>
    <property type="project" value="UniProtKB-UniRule"/>
</dbReference>
<dbReference type="HAMAP" id="MF_04088">
    <property type="entry name" value="ROTA_NSP1"/>
    <property type="match status" value="1"/>
</dbReference>
<dbReference type="InterPro" id="IPR002148">
    <property type="entry name" value="Rotavirus_NSP1"/>
</dbReference>
<dbReference type="Pfam" id="PF00981">
    <property type="entry name" value="Rota_NS53"/>
    <property type="match status" value="1"/>
</dbReference>
<protein>
    <recommendedName>
        <fullName evidence="1">Non-structural protein 1</fullName>
        <shortName evidence="1">NSP1</shortName>
    </recommendedName>
    <alternativeName>
        <fullName evidence="1">NCVP2</fullName>
    </alternativeName>
    <alternativeName>
        <fullName evidence="1">Non-structural RNA-binding protein 53</fullName>
        <shortName evidence="1">NS53</shortName>
    </alternativeName>
</protein>
<accession>P35425</accession>
<name>NSP1_ROTSP</name>
<keyword id="KW-1035">Host cytoplasm</keyword>
<keyword id="KW-1037">Host cytoskeleton</keyword>
<keyword id="KW-0945">Host-virus interaction</keyword>
<keyword id="KW-1090">Inhibition of host innate immune response by virus</keyword>
<keyword id="KW-1092">Inhibition of host IRF3 by virus</keyword>
<keyword id="KW-1093">Inhibition of host IRF7 by virus</keyword>
<keyword id="KW-1113">Inhibition of host RLR pathway by virus</keyword>
<keyword id="KW-0922">Interferon antiviral system evasion</keyword>
<keyword id="KW-0479">Metal-binding</keyword>
<keyword id="KW-0694">RNA-binding</keyword>
<keyword id="KW-0899">Viral immunoevasion</keyword>
<evidence type="ECO:0000255" key="1">
    <source>
        <dbReference type="HAMAP-Rule" id="MF_04088"/>
    </source>
</evidence>